<accession>A1CJM9</accession>
<comment type="function">
    <text evidence="1">Catalytic subunit of the molybdopterin synthase complex, a complex that catalyzes the conversion of precursor Z into molybdopterin. Acts by mediating the incorporation of 2 sulfur atoms from thiocarboxylated MOCS2A into precursor Z to generate a dithiolene group.</text>
</comment>
<comment type="catalytic activity">
    <reaction evidence="1">
        <text>2 [molybdopterin-synthase sulfur-carrier protein]-C-terminal-Gly-aminoethanethioate + cyclic pyranopterin phosphate + H2O = molybdopterin + 2 [molybdopterin-synthase sulfur-carrier protein]-C-terminal Gly-Gly + 2 H(+)</text>
        <dbReference type="Rhea" id="RHEA:26333"/>
        <dbReference type="Rhea" id="RHEA-COMP:12202"/>
        <dbReference type="Rhea" id="RHEA-COMP:19907"/>
        <dbReference type="ChEBI" id="CHEBI:15377"/>
        <dbReference type="ChEBI" id="CHEBI:15378"/>
        <dbReference type="ChEBI" id="CHEBI:58698"/>
        <dbReference type="ChEBI" id="CHEBI:59648"/>
        <dbReference type="ChEBI" id="CHEBI:90778"/>
        <dbReference type="ChEBI" id="CHEBI:232372"/>
        <dbReference type="EC" id="2.8.1.12"/>
    </reaction>
</comment>
<comment type="pathway">
    <text evidence="1">Cofactor biosynthesis; molybdopterin biosynthesis.</text>
</comment>
<comment type="subunit">
    <text evidence="1">Heterotetramer; composed of 2 small (MOCS2A) and 2 large (MOCS2B) subunits.</text>
</comment>
<comment type="subcellular location">
    <subcellularLocation>
        <location evidence="1">Cytoplasm</location>
    </subcellularLocation>
</comment>
<comment type="similarity">
    <text evidence="1">Belongs to the MoaE family. MOCS2B subfamily.</text>
</comment>
<organism>
    <name type="scientific">Aspergillus clavatus (strain ATCC 1007 / CBS 513.65 / DSM 816 / NCTC 3887 / NRRL 1 / QM 1276 / 107)</name>
    <dbReference type="NCBI Taxonomy" id="344612"/>
    <lineage>
        <taxon>Eukaryota</taxon>
        <taxon>Fungi</taxon>
        <taxon>Dikarya</taxon>
        <taxon>Ascomycota</taxon>
        <taxon>Pezizomycotina</taxon>
        <taxon>Eurotiomycetes</taxon>
        <taxon>Eurotiomycetidae</taxon>
        <taxon>Eurotiales</taxon>
        <taxon>Aspergillaceae</taxon>
        <taxon>Aspergillus</taxon>
        <taxon>Aspergillus subgen. Fumigati</taxon>
    </lineage>
</organism>
<proteinExistence type="inferred from homology"/>
<reference key="1">
    <citation type="journal article" date="2008" name="PLoS Genet.">
        <title>Genomic islands in the pathogenic filamentous fungus Aspergillus fumigatus.</title>
        <authorList>
            <person name="Fedorova N.D."/>
            <person name="Khaldi N."/>
            <person name="Joardar V.S."/>
            <person name="Maiti R."/>
            <person name="Amedeo P."/>
            <person name="Anderson M.J."/>
            <person name="Crabtree J."/>
            <person name="Silva J.C."/>
            <person name="Badger J.H."/>
            <person name="Albarraq A."/>
            <person name="Angiuoli S."/>
            <person name="Bussey H."/>
            <person name="Bowyer P."/>
            <person name="Cotty P.J."/>
            <person name="Dyer P.S."/>
            <person name="Egan A."/>
            <person name="Galens K."/>
            <person name="Fraser-Liggett C.M."/>
            <person name="Haas B.J."/>
            <person name="Inman J.M."/>
            <person name="Kent R."/>
            <person name="Lemieux S."/>
            <person name="Malavazi I."/>
            <person name="Orvis J."/>
            <person name="Roemer T."/>
            <person name="Ronning C.M."/>
            <person name="Sundaram J.P."/>
            <person name="Sutton G."/>
            <person name="Turner G."/>
            <person name="Venter J.C."/>
            <person name="White O.R."/>
            <person name="Whitty B.R."/>
            <person name="Youngman P."/>
            <person name="Wolfe K.H."/>
            <person name="Goldman G.H."/>
            <person name="Wortman J.R."/>
            <person name="Jiang B."/>
            <person name="Denning D.W."/>
            <person name="Nierman W.C."/>
        </authorList>
    </citation>
    <scope>NUCLEOTIDE SEQUENCE [LARGE SCALE GENOMIC DNA]</scope>
    <source>
        <strain>ATCC 1007 / CBS 513.65 / DSM 816 / NCTC 3887 / NRRL 1 / QM 1276 / 107</strain>
    </source>
</reference>
<feature type="chain" id="PRO_0000369349" description="Molybdopterin synthase catalytic subunit">
    <location>
        <begin position="1"/>
        <end position="198"/>
    </location>
</feature>
<feature type="region of interest" description="Disordered" evidence="2">
    <location>
        <begin position="1"/>
        <end position="40"/>
    </location>
</feature>
<feature type="region of interest" description="Disordered" evidence="2">
    <location>
        <begin position="176"/>
        <end position="198"/>
    </location>
</feature>
<feature type="compositionally biased region" description="Low complexity" evidence="2">
    <location>
        <begin position="1"/>
        <end position="27"/>
    </location>
</feature>
<feature type="binding site" evidence="1">
    <location>
        <begin position="143"/>
        <end position="144"/>
    </location>
    <ligand>
        <name>substrate</name>
    </ligand>
</feature>
<feature type="binding site" evidence="1">
    <location>
        <position position="159"/>
    </location>
    <ligand>
        <name>substrate</name>
    </ligand>
</feature>
<feature type="binding site" evidence="1">
    <location>
        <begin position="166"/>
        <end position="168"/>
    </location>
    <ligand>
        <name>substrate</name>
    </ligand>
</feature>
<name>MOC2B_ASPCL</name>
<gene>
    <name evidence="1" type="primary">cnxH</name>
    <name type="ORF">ACLA_035560</name>
</gene>
<protein>
    <recommendedName>
        <fullName evidence="1">Molybdopterin synthase catalytic subunit</fullName>
        <ecNumber evidence="1">2.8.1.12</ecNumber>
    </recommendedName>
    <alternativeName>
        <fullName evidence="1">Common component for nitrate reductase and xanthine dehydrogenase protein H</fullName>
    </alternativeName>
    <alternativeName>
        <fullName evidence="1">Molybdenum cofactor synthesis protein 2 large subunit</fullName>
    </alternativeName>
    <alternativeName>
        <fullName evidence="1">Molybdenum cofactor synthesis protein 2B</fullName>
        <shortName evidence="1">MOCS2B</shortName>
    </alternativeName>
</protein>
<sequence>MASQPPQEPTPTATSTPSTSALASLPPHLDPTTYPRTLTSPTHNIHLELTYSPLNPSQALTHTSSPAAGANVLFLGTTRDTFEGRAVSQLSYTCYPPLALKTLLDIATKAAEKFRLEGVYIAHRLGVVPIQESSIVVAVSAGHRGMAWRAGEEVLEEVKARLEVWKREEFVDGGMEWRENRERDAEGKVVAEKQEERE</sequence>
<dbReference type="EC" id="2.8.1.12" evidence="1"/>
<dbReference type="EMBL" id="DS027056">
    <property type="protein sequence ID" value="EAW09353.1"/>
    <property type="molecule type" value="Genomic_DNA"/>
</dbReference>
<dbReference type="RefSeq" id="XP_001270779.1">
    <property type="nucleotide sequence ID" value="XM_001270778.1"/>
</dbReference>
<dbReference type="SMR" id="A1CJM9"/>
<dbReference type="STRING" id="344612.A1CJM9"/>
<dbReference type="EnsemblFungi" id="EAW09353">
    <property type="protein sequence ID" value="EAW09353"/>
    <property type="gene ID" value="ACLA_035560"/>
</dbReference>
<dbReference type="GeneID" id="4702910"/>
<dbReference type="KEGG" id="act:ACLA_035560"/>
<dbReference type="VEuPathDB" id="FungiDB:ACLA_035560"/>
<dbReference type="eggNOG" id="KOG3307">
    <property type="taxonomic scope" value="Eukaryota"/>
</dbReference>
<dbReference type="HOGENOM" id="CLU_089568_3_1_1"/>
<dbReference type="OMA" id="WKHQFFA"/>
<dbReference type="OrthoDB" id="5531344at2759"/>
<dbReference type="UniPathway" id="UPA00344"/>
<dbReference type="Proteomes" id="UP000006701">
    <property type="component" value="Unassembled WGS sequence"/>
</dbReference>
<dbReference type="GO" id="GO:1990140">
    <property type="term" value="C:molybdopterin synthase complex"/>
    <property type="evidence" value="ECO:0000250"/>
    <property type="project" value="UniProtKB"/>
</dbReference>
<dbReference type="GO" id="GO:0030366">
    <property type="term" value="F:molybdopterin synthase activity"/>
    <property type="evidence" value="ECO:0007669"/>
    <property type="project" value="UniProtKB-UniRule"/>
</dbReference>
<dbReference type="GO" id="GO:0006777">
    <property type="term" value="P:Mo-molybdopterin cofactor biosynthetic process"/>
    <property type="evidence" value="ECO:0000250"/>
    <property type="project" value="UniProtKB"/>
</dbReference>
<dbReference type="CDD" id="cd00756">
    <property type="entry name" value="MoaE"/>
    <property type="match status" value="1"/>
</dbReference>
<dbReference type="FunFam" id="3.90.1170.40:FF:000003">
    <property type="entry name" value="Molybdopterin converting factor subunit 2"/>
    <property type="match status" value="1"/>
</dbReference>
<dbReference type="Gene3D" id="3.90.1170.40">
    <property type="entry name" value="Molybdopterin biosynthesis MoaE subunit"/>
    <property type="match status" value="1"/>
</dbReference>
<dbReference type="HAMAP" id="MF_03052">
    <property type="entry name" value="MOC2B"/>
    <property type="match status" value="1"/>
</dbReference>
<dbReference type="InterPro" id="IPR036563">
    <property type="entry name" value="MoaE_sf"/>
</dbReference>
<dbReference type="InterPro" id="IPR028888">
    <property type="entry name" value="MOCS2B_euk"/>
</dbReference>
<dbReference type="InterPro" id="IPR003448">
    <property type="entry name" value="Mopterin_biosynth_MoaE"/>
</dbReference>
<dbReference type="PANTHER" id="PTHR23404">
    <property type="entry name" value="MOLYBDOPTERIN SYNTHASE RELATED"/>
    <property type="match status" value="1"/>
</dbReference>
<dbReference type="Pfam" id="PF02391">
    <property type="entry name" value="MoaE"/>
    <property type="match status" value="1"/>
</dbReference>
<dbReference type="SUPFAM" id="SSF54690">
    <property type="entry name" value="Molybdopterin synthase subunit MoaE"/>
    <property type="match status" value="1"/>
</dbReference>
<evidence type="ECO:0000255" key="1">
    <source>
        <dbReference type="HAMAP-Rule" id="MF_03052"/>
    </source>
</evidence>
<evidence type="ECO:0000256" key="2">
    <source>
        <dbReference type="SAM" id="MobiDB-lite"/>
    </source>
</evidence>
<keyword id="KW-0963">Cytoplasm</keyword>
<keyword id="KW-0501">Molybdenum cofactor biosynthesis</keyword>
<keyword id="KW-1185">Reference proteome</keyword>
<keyword id="KW-0808">Transferase</keyword>